<organism>
    <name type="scientific">Arabidopsis thaliana</name>
    <name type="common">Mouse-ear cress</name>
    <dbReference type="NCBI Taxonomy" id="3702"/>
    <lineage>
        <taxon>Eukaryota</taxon>
        <taxon>Viridiplantae</taxon>
        <taxon>Streptophyta</taxon>
        <taxon>Embryophyta</taxon>
        <taxon>Tracheophyta</taxon>
        <taxon>Spermatophyta</taxon>
        <taxon>Magnoliopsida</taxon>
        <taxon>eudicotyledons</taxon>
        <taxon>Gunneridae</taxon>
        <taxon>Pentapetalae</taxon>
        <taxon>rosids</taxon>
        <taxon>malvids</taxon>
        <taxon>Brassicales</taxon>
        <taxon>Brassicaceae</taxon>
        <taxon>Camelineae</taxon>
        <taxon>Arabidopsis</taxon>
    </lineage>
</organism>
<evidence type="ECO:0000256" key="1">
    <source>
        <dbReference type="SAM" id="MobiDB-lite"/>
    </source>
</evidence>
<evidence type="ECO:0000269" key="2">
    <source>
    </source>
</evidence>
<evidence type="ECO:0000269" key="3">
    <source>
    </source>
</evidence>
<evidence type="ECO:0000303" key="4">
    <source>
    </source>
</evidence>
<evidence type="ECO:0000303" key="5">
    <source>
    </source>
</evidence>
<evidence type="ECO:0000305" key="6"/>
<evidence type="ECO:0000312" key="7">
    <source>
        <dbReference type="Araport" id="AT3G01670"/>
    </source>
</evidence>
<evidence type="ECO:0000312" key="8">
    <source>
        <dbReference type="EMBL" id="AAF01550.1"/>
    </source>
</evidence>
<protein>
    <recommendedName>
        <fullName evidence="4">Protein SIEVE ELEMENT OCCLUSION A</fullName>
        <shortName evidence="4">AtSEOa</shortName>
    </recommendedName>
    <alternativeName>
        <fullName evidence="5">Protein SIEVE ELEMENT OCCLUSION-RELATED 2</fullName>
        <shortName evidence="5">AtSEOR2</shortName>
    </alternativeName>
</protein>
<proteinExistence type="evidence at protein level"/>
<comment type="function">
    <text evidence="3">Scaffold protein required to form the phloem filament matrix in sieve elements.</text>
</comment>
<comment type="subunit">
    <text evidence="3">Can form homodimer.</text>
</comment>
<comment type="interaction">
    <interactant intactId="EBI-4424691">
        <id>Q93XX2</id>
    </interactant>
    <interactant intactId="EBI-2358896">
        <id>Q9SJG9</id>
        <label>MPK20</label>
    </interactant>
    <organismsDiffer>false</organismsDiffer>
    <experiments>3</experiments>
</comment>
<comment type="interaction">
    <interactant intactId="EBI-4424691">
        <id>Q93XX2</id>
    </interactant>
    <interactant intactId="EBI-4424685">
        <id>Q42536</id>
        <label>PORA</label>
    </interactant>
    <organismsDiffer>false</organismsDiffer>
    <experiments>4</experiments>
</comment>
<comment type="tissue specificity">
    <text evidence="2">Expressed in phloem sieve elements.</text>
</comment>
<comment type="disruption phenotype">
    <text evidence="3">No visible phenotype under normal growth conditions.</text>
</comment>
<comment type="sequence caution" evidence="6">
    <conflict type="erroneous initiation">
        <sequence resource="EMBL-CDS" id="AAF01550"/>
    </conflict>
    <text>Extended N-terminus.</text>
</comment>
<keyword id="KW-1185">Reference proteome</keyword>
<name>SEOA_ARATH</name>
<reference key="1">
    <citation type="journal article" date="2010" name="BMC Plant Biol.">
        <title>Molecular and phylogenetic characterization of the sieve element occlusion gene family in Fabaceae and non-Fabaceae plants.</title>
        <authorList>
            <person name="Ruping B."/>
            <person name="Ernst A.M."/>
            <person name="Jekat S.B."/>
            <person name="Nordzieke S."/>
            <person name="Reineke A.R."/>
            <person name="Muller B."/>
            <person name="Bornberg-Bauer E."/>
            <person name="Prufer D."/>
            <person name="Noll G.A."/>
        </authorList>
    </citation>
    <scope>NUCLEOTIDE SEQUENCE [MRNA]</scope>
    <scope>TISSUE SPECIFICITY</scope>
    <scope>GENE FAMILY</scope>
    <scope>NOMENCLATURE</scope>
</reference>
<reference key="2">
    <citation type="journal article" date="2000" name="Nature">
        <title>Sequence and analysis of chromosome 3 of the plant Arabidopsis thaliana.</title>
        <authorList>
            <person name="Salanoubat M."/>
            <person name="Lemcke K."/>
            <person name="Rieger M."/>
            <person name="Ansorge W."/>
            <person name="Unseld M."/>
            <person name="Fartmann B."/>
            <person name="Valle G."/>
            <person name="Bloecker H."/>
            <person name="Perez-Alonso M."/>
            <person name="Obermaier B."/>
            <person name="Delseny M."/>
            <person name="Boutry M."/>
            <person name="Grivell L.A."/>
            <person name="Mache R."/>
            <person name="Puigdomenech P."/>
            <person name="De Simone V."/>
            <person name="Choisne N."/>
            <person name="Artiguenave F."/>
            <person name="Robert C."/>
            <person name="Brottier P."/>
            <person name="Wincker P."/>
            <person name="Cattolico L."/>
            <person name="Weissenbach J."/>
            <person name="Saurin W."/>
            <person name="Quetier F."/>
            <person name="Schaefer M."/>
            <person name="Mueller-Auer S."/>
            <person name="Gabel C."/>
            <person name="Fuchs M."/>
            <person name="Benes V."/>
            <person name="Wurmbach E."/>
            <person name="Drzonek H."/>
            <person name="Erfle H."/>
            <person name="Jordan N."/>
            <person name="Bangert S."/>
            <person name="Wiedelmann R."/>
            <person name="Kranz H."/>
            <person name="Voss H."/>
            <person name="Holland R."/>
            <person name="Brandt P."/>
            <person name="Nyakatura G."/>
            <person name="Vezzi A."/>
            <person name="D'Angelo M."/>
            <person name="Pallavicini A."/>
            <person name="Toppo S."/>
            <person name="Simionati B."/>
            <person name="Conrad A."/>
            <person name="Hornischer K."/>
            <person name="Kauer G."/>
            <person name="Loehnert T.-H."/>
            <person name="Nordsiek G."/>
            <person name="Reichelt J."/>
            <person name="Scharfe M."/>
            <person name="Schoen O."/>
            <person name="Bargues M."/>
            <person name="Terol J."/>
            <person name="Climent J."/>
            <person name="Navarro P."/>
            <person name="Collado C."/>
            <person name="Perez-Perez A."/>
            <person name="Ottenwaelder B."/>
            <person name="Duchemin D."/>
            <person name="Cooke R."/>
            <person name="Laudie M."/>
            <person name="Berger-Llauro C."/>
            <person name="Purnelle B."/>
            <person name="Masuy D."/>
            <person name="de Haan M."/>
            <person name="Maarse A.C."/>
            <person name="Alcaraz J.-P."/>
            <person name="Cottet A."/>
            <person name="Casacuberta E."/>
            <person name="Monfort A."/>
            <person name="Argiriou A."/>
            <person name="Flores M."/>
            <person name="Liguori R."/>
            <person name="Vitale D."/>
            <person name="Mannhaupt G."/>
            <person name="Haase D."/>
            <person name="Schoof H."/>
            <person name="Rudd S."/>
            <person name="Zaccaria P."/>
            <person name="Mewes H.-W."/>
            <person name="Mayer K.F.X."/>
            <person name="Kaul S."/>
            <person name="Town C.D."/>
            <person name="Koo H.L."/>
            <person name="Tallon L.J."/>
            <person name="Jenkins J."/>
            <person name="Rooney T."/>
            <person name="Rizzo M."/>
            <person name="Walts A."/>
            <person name="Utterback T."/>
            <person name="Fujii C.Y."/>
            <person name="Shea T.P."/>
            <person name="Creasy T.H."/>
            <person name="Haas B."/>
            <person name="Maiti R."/>
            <person name="Wu D."/>
            <person name="Peterson J."/>
            <person name="Van Aken S."/>
            <person name="Pai G."/>
            <person name="Militscher J."/>
            <person name="Sellers P."/>
            <person name="Gill J.E."/>
            <person name="Feldblyum T.V."/>
            <person name="Preuss D."/>
            <person name="Lin X."/>
            <person name="Nierman W.C."/>
            <person name="Salzberg S.L."/>
            <person name="White O."/>
            <person name="Venter J.C."/>
            <person name="Fraser C.M."/>
            <person name="Kaneko T."/>
            <person name="Nakamura Y."/>
            <person name="Sato S."/>
            <person name="Kato T."/>
            <person name="Asamizu E."/>
            <person name="Sasamoto S."/>
            <person name="Kimura T."/>
            <person name="Idesawa K."/>
            <person name="Kawashima K."/>
            <person name="Kishida Y."/>
            <person name="Kiyokawa C."/>
            <person name="Kohara M."/>
            <person name="Matsumoto M."/>
            <person name="Matsuno A."/>
            <person name="Muraki A."/>
            <person name="Nakayama S."/>
            <person name="Nakazaki N."/>
            <person name="Shinpo S."/>
            <person name="Takeuchi C."/>
            <person name="Wada T."/>
            <person name="Watanabe A."/>
            <person name="Yamada M."/>
            <person name="Yasuda M."/>
            <person name="Tabata S."/>
        </authorList>
    </citation>
    <scope>NUCLEOTIDE SEQUENCE [LARGE SCALE GENOMIC DNA]</scope>
    <source>
        <strain>cv. Columbia</strain>
    </source>
</reference>
<reference key="3">
    <citation type="journal article" date="2017" name="Plant J.">
        <title>Araport11: a complete reannotation of the Arabidopsis thaliana reference genome.</title>
        <authorList>
            <person name="Cheng C.Y."/>
            <person name="Krishnakumar V."/>
            <person name="Chan A.P."/>
            <person name="Thibaud-Nissen F."/>
            <person name="Schobel S."/>
            <person name="Town C.D."/>
        </authorList>
    </citation>
    <scope>GENOME REANNOTATION</scope>
    <source>
        <strain>cv. Columbia</strain>
    </source>
</reference>
<reference key="4">
    <citation type="journal article" date="2003" name="Science">
        <title>Empirical analysis of transcriptional activity in the Arabidopsis genome.</title>
        <authorList>
            <person name="Yamada K."/>
            <person name="Lim J."/>
            <person name="Dale J.M."/>
            <person name="Chen H."/>
            <person name="Shinn P."/>
            <person name="Palm C.J."/>
            <person name="Southwick A.M."/>
            <person name="Wu H.C."/>
            <person name="Kim C.J."/>
            <person name="Nguyen M."/>
            <person name="Pham P.K."/>
            <person name="Cheuk R.F."/>
            <person name="Karlin-Newmann G."/>
            <person name="Liu S.X."/>
            <person name="Lam B."/>
            <person name="Sakano H."/>
            <person name="Wu T."/>
            <person name="Yu G."/>
            <person name="Miranda M."/>
            <person name="Quach H.L."/>
            <person name="Tripp M."/>
            <person name="Chang C.H."/>
            <person name="Lee J.M."/>
            <person name="Toriumi M.J."/>
            <person name="Chan M.M."/>
            <person name="Tang C.C."/>
            <person name="Onodera C.S."/>
            <person name="Deng J.M."/>
            <person name="Akiyama K."/>
            <person name="Ansari Y."/>
            <person name="Arakawa T."/>
            <person name="Banh J."/>
            <person name="Banno F."/>
            <person name="Bowser L."/>
            <person name="Brooks S.Y."/>
            <person name="Carninci P."/>
            <person name="Chao Q."/>
            <person name="Choy N."/>
            <person name="Enju A."/>
            <person name="Goldsmith A.D."/>
            <person name="Gurjal M."/>
            <person name="Hansen N.F."/>
            <person name="Hayashizaki Y."/>
            <person name="Johnson-Hopson C."/>
            <person name="Hsuan V.W."/>
            <person name="Iida K."/>
            <person name="Karnes M."/>
            <person name="Khan S."/>
            <person name="Koesema E."/>
            <person name="Ishida J."/>
            <person name="Jiang P.X."/>
            <person name="Jones T."/>
            <person name="Kawai J."/>
            <person name="Kamiya A."/>
            <person name="Meyers C."/>
            <person name="Nakajima M."/>
            <person name="Narusaka M."/>
            <person name="Seki M."/>
            <person name="Sakurai T."/>
            <person name="Satou M."/>
            <person name="Tamse R."/>
            <person name="Vaysberg M."/>
            <person name="Wallender E.K."/>
            <person name="Wong C."/>
            <person name="Yamamura Y."/>
            <person name="Yuan S."/>
            <person name="Shinozaki K."/>
            <person name="Davis R.W."/>
            <person name="Theologis A."/>
            <person name="Ecker J.R."/>
        </authorList>
    </citation>
    <scope>NUCLEOTIDE SEQUENCE [LARGE SCALE MRNA]</scope>
    <source>
        <strain>cv. Columbia</strain>
    </source>
</reference>
<reference key="5">
    <citation type="journal article" date="2012" name="Plant Cell Physiol.">
        <title>Arabidopsis P-protein filament formation requires both AtSEOR1 and AtSEOR2.</title>
        <authorList>
            <person name="Anstead J.A."/>
            <person name="Froelich D.R."/>
            <person name="Knoblauch M."/>
            <person name="Thompson G.A."/>
        </authorList>
    </citation>
    <scope>IDENTIFICATION BY MASS SPECTROMETRY</scope>
    <scope>FUNCTION</scope>
    <scope>SUBUNIT</scope>
    <scope>DISRUPTION PHENOTYPE</scope>
</reference>
<feature type="chain" id="PRO_0000432873" description="Protein SIEVE ELEMENT OCCLUSION A">
    <location>
        <begin position="1"/>
        <end position="822"/>
    </location>
</feature>
<feature type="region of interest" description="Disordered" evidence="1">
    <location>
        <begin position="25"/>
        <end position="62"/>
    </location>
</feature>
<feature type="compositionally biased region" description="Basic and acidic residues" evidence="1">
    <location>
        <begin position="28"/>
        <end position="62"/>
    </location>
</feature>
<accession>Q93XX2</accession>
<accession>Q9SS88</accession>
<dbReference type="EMBL" id="HM162885">
    <property type="protein sequence ID" value="ADN32813.1"/>
    <property type="molecule type" value="mRNA"/>
</dbReference>
<dbReference type="EMBL" id="AC009325">
    <property type="protein sequence ID" value="AAF01550.1"/>
    <property type="status" value="ALT_INIT"/>
    <property type="molecule type" value="Genomic_DNA"/>
</dbReference>
<dbReference type="EMBL" id="CP002686">
    <property type="protein sequence ID" value="AEE73701.1"/>
    <property type="molecule type" value="Genomic_DNA"/>
</dbReference>
<dbReference type="EMBL" id="AY059845">
    <property type="protein sequence ID" value="AAL24327.1"/>
    <property type="molecule type" value="mRNA"/>
</dbReference>
<dbReference type="EMBL" id="BT008797">
    <property type="protein sequence ID" value="AAP68236.1"/>
    <property type="molecule type" value="mRNA"/>
</dbReference>
<dbReference type="RefSeq" id="NP_001325831.1">
    <property type="nucleotide sequence ID" value="NM_001337353.1"/>
</dbReference>
<dbReference type="RefSeq" id="NP_566145.1">
    <property type="nucleotide sequence ID" value="NM_111033.3"/>
</dbReference>
<dbReference type="SMR" id="Q93XX2"/>
<dbReference type="FunCoup" id="Q93XX2">
    <property type="interactions" value="5"/>
</dbReference>
<dbReference type="IntAct" id="Q93XX2">
    <property type="interactions" value="19"/>
</dbReference>
<dbReference type="STRING" id="3702.Q93XX2"/>
<dbReference type="iPTMnet" id="Q93XX2"/>
<dbReference type="PaxDb" id="3702-AT3G01670.1"/>
<dbReference type="EnsemblPlants" id="AT3G01670.1">
    <property type="protein sequence ID" value="AT3G01670.1"/>
    <property type="gene ID" value="AT3G01670"/>
</dbReference>
<dbReference type="GeneID" id="821096"/>
<dbReference type="Gramene" id="AT3G01670.1">
    <property type="protein sequence ID" value="AT3G01670.1"/>
    <property type="gene ID" value="AT3G01670"/>
</dbReference>
<dbReference type="KEGG" id="ath:AT3G01670"/>
<dbReference type="Araport" id="AT3G01670"/>
<dbReference type="TAIR" id="AT3G01670">
    <property type="gene designation" value="SEOA"/>
</dbReference>
<dbReference type="eggNOG" id="ENOG502QS6Q">
    <property type="taxonomic scope" value="Eukaryota"/>
</dbReference>
<dbReference type="HOGENOM" id="CLU_025476_0_0_1"/>
<dbReference type="InParanoid" id="Q93XX2"/>
<dbReference type="OrthoDB" id="1049599at2759"/>
<dbReference type="PRO" id="PR:Q93XX2"/>
<dbReference type="Proteomes" id="UP000006548">
    <property type="component" value="Chromosome 3"/>
</dbReference>
<dbReference type="ExpressionAtlas" id="Q93XX2">
    <property type="expression patterns" value="baseline and differential"/>
</dbReference>
<dbReference type="GO" id="GO:0042803">
    <property type="term" value="F:protein homodimerization activity"/>
    <property type="evidence" value="ECO:0000353"/>
    <property type="project" value="UniProtKB"/>
</dbReference>
<dbReference type="GO" id="GO:0010088">
    <property type="term" value="P:phloem development"/>
    <property type="evidence" value="ECO:0000315"/>
    <property type="project" value="UniProtKB"/>
</dbReference>
<dbReference type="InterPro" id="IPR027944">
    <property type="entry name" value="SEO_C"/>
</dbReference>
<dbReference type="InterPro" id="IPR027942">
    <property type="entry name" value="SEO_N"/>
</dbReference>
<dbReference type="InterPro" id="IPR039299">
    <property type="entry name" value="SEOA"/>
</dbReference>
<dbReference type="PANTHER" id="PTHR33232:SF16">
    <property type="entry name" value="PROTEIN SIEVE ELEMENT OCCLUSION A"/>
    <property type="match status" value="1"/>
</dbReference>
<dbReference type="PANTHER" id="PTHR33232">
    <property type="entry name" value="PROTEIN SIEVE ELEMENT OCCLUSION B-LIKE"/>
    <property type="match status" value="1"/>
</dbReference>
<dbReference type="Pfam" id="PF14577">
    <property type="entry name" value="SEO_C"/>
    <property type="match status" value="1"/>
</dbReference>
<dbReference type="Pfam" id="PF14576">
    <property type="entry name" value="SEO_N"/>
    <property type="match status" value="1"/>
</dbReference>
<sequence>MAQRFQLNSQTLPTADPLKRVSLIPRSAEQRLADNAGERRPLAPRSHEDNPFGGHTDDHHVAAPADHNKVMDHNSENLGSIVPKTAHYPHPSEEILDANIRHSMVPKSLGPNSLGGRFGPGKKQAFHRNGRPMFSLSDDRVMADRVLKTHSPDMIFFDVTSLLSVVNDIFKSHVPSIDSSAPKPSLVFKDYADHTSFETFADLIDQISCEIDCKCLHGGESHGMMTSGLHLDSRNTTTFSVLSLVSKYRWDAKLVLVLSALAVKYGVFLLLAETHATNQLTKSLALIKQLPSIFSRQNALHQRLDKTRILMQDMVDLTTTIIDIYQLPPNHITAAFTDHIPTAVYWIVRCVLICVSHISGASGFKQDQIMSFMEVSEIHENSERLRKINAYLLEQFKKSKMTIEEGIIEEEYQELIQTFTTIIHVDVVPPLLRLLRPIDFLYHGAGVSKRRVGINVLTQKHVLLLISDLENIEKELYILESLYTEAWQQSFEILWVPVQDFWTEADDAKFEALHMNMRWYVLGEPRKLRRAAIRFVREWWGFKNRPILVALDPKGQVMSTNAFPMVWIWQPFAHPFTTARERDLWSEQEWNLEFLIDGTDPHSLNQLVDGKYICLYGGEDMQWIKNFTSLWRNVAKAANIQLEMVYVGKRNPKNGIQPIINTIREENLSHTLPDLFQIWFFWTRVESMWESKQRMLKAHGIKGREGFKEEEKDLVLQEVVAMLGYGGEGDGWGLVSKASDMMVRAKGNLFSRGLAEFNEWEVNIPTKGFLTALNDHLLMRLPPHHCTRFMLPETAGIIPNEVECTECRRTMEKYYLYQCCLE</sequence>
<gene>
    <name evidence="4" type="primary">SEOA</name>
    <name evidence="5" type="synonym">SEOR2</name>
    <name evidence="7" type="ordered locus">At3g01670</name>
    <name evidence="8" type="ORF">F4P13.21</name>
</gene>